<keyword id="KW-0067">ATP-binding</keyword>
<keyword id="KW-0150">Chloroplast</keyword>
<keyword id="KW-0418">Kinase</keyword>
<keyword id="KW-0496">Mitochondrion</keyword>
<keyword id="KW-0547">Nucleotide-binding</keyword>
<keyword id="KW-0934">Plastid</keyword>
<keyword id="KW-1185">Reference proteome</keyword>
<keyword id="KW-0808">Transferase</keyword>
<keyword id="KW-0809">Transit peptide</keyword>
<organism>
    <name type="scientific">Oryza sativa subsp. japonica</name>
    <name type="common">Rice</name>
    <dbReference type="NCBI Taxonomy" id="39947"/>
    <lineage>
        <taxon>Eukaryota</taxon>
        <taxon>Viridiplantae</taxon>
        <taxon>Streptophyta</taxon>
        <taxon>Embryophyta</taxon>
        <taxon>Tracheophyta</taxon>
        <taxon>Spermatophyta</taxon>
        <taxon>Magnoliopsida</taxon>
        <taxon>Liliopsida</taxon>
        <taxon>Poales</taxon>
        <taxon>Poaceae</taxon>
        <taxon>BOP clade</taxon>
        <taxon>Oryzoideae</taxon>
        <taxon>Oryzeae</taxon>
        <taxon>Oryzinae</taxon>
        <taxon>Oryza</taxon>
        <taxon>Oryza sativa</taxon>
    </lineage>
</organism>
<sequence length="285" mass="31680">MLLTRRFSSALARSPLLPRSLPPPRAVPATPPAPRPPPRRLMSSSSSGWHHSSRPPPPPPSGADKDQLFRGLEAALGTTFSSEPLAPPPQPMILVISGPSGVGKDAVIQRLQEEREGMHFVVTATSRAKRPGEVDGKDYYFVTKEEFLTMIERKELLEYALVYGEYKGIPKQQIRDYMAKGYDIVLRVDIQGAATLREILGESAIFIFLVAESEEALVKRLIHRKTETSDMLLVRVATAREEVKRMNNFDYVVVNSEGNLEGAVKQVESIIDAEKAKVHKRTVNI</sequence>
<name>GMK2_ORYSJ</name>
<dbReference type="EC" id="2.7.4.8"/>
<dbReference type="EMBL" id="AB267728">
    <property type="protein sequence ID" value="BAF46274.1"/>
    <property type="molecule type" value="mRNA"/>
</dbReference>
<dbReference type="EMBL" id="DP000009">
    <property type="protein sequence ID" value="ABF95662.1"/>
    <property type="molecule type" value="Genomic_DNA"/>
</dbReference>
<dbReference type="EMBL" id="AP008209">
    <property type="protein sequence ID" value="BAF11870.1"/>
    <property type="molecule type" value="Genomic_DNA"/>
</dbReference>
<dbReference type="EMBL" id="AP014959">
    <property type="protein sequence ID" value="BAS83937.1"/>
    <property type="molecule type" value="Genomic_DNA"/>
</dbReference>
<dbReference type="EMBL" id="AK106255">
    <property type="protein sequence ID" value="BAG97659.1"/>
    <property type="molecule type" value="mRNA"/>
</dbReference>
<dbReference type="RefSeq" id="XP_015628708.1">
    <property type="nucleotide sequence ID" value="XM_015773222.1"/>
</dbReference>
<dbReference type="SMR" id="Q10M74"/>
<dbReference type="FunCoup" id="Q10M74">
    <property type="interactions" value="2379"/>
</dbReference>
<dbReference type="STRING" id="39947.Q10M74"/>
<dbReference type="PaxDb" id="39947-Q10M74"/>
<dbReference type="EnsemblPlants" id="Os03t0320900-01">
    <property type="protein sequence ID" value="Os03t0320900-01"/>
    <property type="gene ID" value="Os03g0320900"/>
</dbReference>
<dbReference type="Gramene" id="Os03t0320900-01">
    <property type="protein sequence ID" value="Os03t0320900-01"/>
    <property type="gene ID" value="Os03g0320900"/>
</dbReference>
<dbReference type="KEGG" id="dosa:Os03g0320900"/>
<dbReference type="eggNOG" id="KOG0707">
    <property type="taxonomic scope" value="Eukaryota"/>
</dbReference>
<dbReference type="HOGENOM" id="CLU_072704_0_0_1"/>
<dbReference type="InParanoid" id="Q10M74"/>
<dbReference type="OMA" id="EWAVVHG"/>
<dbReference type="OrthoDB" id="6334211at2759"/>
<dbReference type="BRENDA" id="2.7.4.8">
    <property type="organism ID" value="8948"/>
</dbReference>
<dbReference type="Proteomes" id="UP000000763">
    <property type="component" value="Chromosome 3"/>
</dbReference>
<dbReference type="Proteomes" id="UP000059680">
    <property type="component" value="Chromosome 3"/>
</dbReference>
<dbReference type="GO" id="GO:0009507">
    <property type="term" value="C:chloroplast"/>
    <property type="evidence" value="ECO:0007669"/>
    <property type="project" value="UniProtKB-SubCell"/>
</dbReference>
<dbReference type="GO" id="GO:0005829">
    <property type="term" value="C:cytosol"/>
    <property type="evidence" value="ECO:0000318"/>
    <property type="project" value="GO_Central"/>
</dbReference>
<dbReference type="GO" id="GO:0005739">
    <property type="term" value="C:mitochondrion"/>
    <property type="evidence" value="ECO:0007669"/>
    <property type="project" value="UniProtKB-SubCell"/>
</dbReference>
<dbReference type="GO" id="GO:0005524">
    <property type="term" value="F:ATP binding"/>
    <property type="evidence" value="ECO:0007669"/>
    <property type="project" value="UniProtKB-KW"/>
</dbReference>
<dbReference type="GO" id="GO:0004385">
    <property type="term" value="F:guanylate kinase activity"/>
    <property type="evidence" value="ECO:0000318"/>
    <property type="project" value="GO_Central"/>
</dbReference>
<dbReference type="GO" id="GO:0048638">
    <property type="term" value="P:regulation of developmental growth"/>
    <property type="evidence" value="ECO:0007669"/>
    <property type="project" value="EnsemblPlants"/>
</dbReference>
<dbReference type="CDD" id="cd00071">
    <property type="entry name" value="GMPK"/>
    <property type="match status" value="1"/>
</dbReference>
<dbReference type="FunFam" id="3.40.50.300:FF:000776">
    <property type="entry name" value="Guanylate kinase 2"/>
    <property type="match status" value="1"/>
</dbReference>
<dbReference type="Gene3D" id="3.40.50.300">
    <property type="entry name" value="P-loop containing nucleotide triphosphate hydrolases"/>
    <property type="match status" value="1"/>
</dbReference>
<dbReference type="InterPro" id="IPR008145">
    <property type="entry name" value="GK/Ca_channel_bsu"/>
</dbReference>
<dbReference type="InterPro" id="IPR008144">
    <property type="entry name" value="Guanylate_kin-like_dom"/>
</dbReference>
<dbReference type="InterPro" id="IPR017665">
    <property type="entry name" value="Guanylate_kinase"/>
</dbReference>
<dbReference type="InterPro" id="IPR020590">
    <property type="entry name" value="Guanylate_kinase_CS"/>
</dbReference>
<dbReference type="InterPro" id="IPR027417">
    <property type="entry name" value="P-loop_NTPase"/>
</dbReference>
<dbReference type="NCBIfam" id="TIGR03263">
    <property type="entry name" value="guanyl_kin"/>
    <property type="match status" value="1"/>
</dbReference>
<dbReference type="PANTHER" id="PTHR23117:SF13">
    <property type="entry name" value="GUANYLATE KINASE"/>
    <property type="match status" value="1"/>
</dbReference>
<dbReference type="PANTHER" id="PTHR23117">
    <property type="entry name" value="GUANYLATE KINASE-RELATED"/>
    <property type="match status" value="1"/>
</dbReference>
<dbReference type="Pfam" id="PF00625">
    <property type="entry name" value="Guanylate_kin"/>
    <property type="match status" value="1"/>
</dbReference>
<dbReference type="SMART" id="SM00072">
    <property type="entry name" value="GuKc"/>
    <property type="match status" value="1"/>
</dbReference>
<dbReference type="SUPFAM" id="SSF52540">
    <property type="entry name" value="P-loop containing nucleoside triphosphate hydrolases"/>
    <property type="match status" value="1"/>
</dbReference>
<dbReference type="PROSITE" id="PS00856">
    <property type="entry name" value="GUANYLATE_KINASE_1"/>
    <property type="match status" value="1"/>
</dbReference>
<dbReference type="PROSITE" id="PS50052">
    <property type="entry name" value="GUANYLATE_KINASE_2"/>
    <property type="match status" value="1"/>
</dbReference>
<evidence type="ECO:0000250" key="1"/>
<evidence type="ECO:0000255" key="2"/>
<evidence type="ECO:0000255" key="3">
    <source>
        <dbReference type="PROSITE-ProRule" id="PRU00100"/>
    </source>
</evidence>
<evidence type="ECO:0000256" key="4">
    <source>
        <dbReference type="SAM" id="MobiDB-lite"/>
    </source>
</evidence>
<evidence type="ECO:0000269" key="5">
    <source>
    </source>
</evidence>
<evidence type="ECO:0000269" key="6">
    <source>
    </source>
</evidence>
<evidence type="ECO:0000305" key="7"/>
<comment type="function">
    <text evidence="5 6">Essential for recycling GMP and indirectly, cGMP. Essential for chloroplast differentiation at early stage of leaf development. May not be involved in the synthesis and maintenance of the organellar DNA during leaf development.</text>
</comment>
<comment type="catalytic activity">
    <reaction evidence="6">
        <text>GMP + ATP = GDP + ADP</text>
        <dbReference type="Rhea" id="RHEA:20780"/>
        <dbReference type="ChEBI" id="CHEBI:30616"/>
        <dbReference type="ChEBI" id="CHEBI:58115"/>
        <dbReference type="ChEBI" id="CHEBI:58189"/>
        <dbReference type="ChEBI" id="CHEBI:456216"/>
        <dbReference type="EC" id="2.7.4.8"/>
    </reaction>
</comment>
<comment type="subunit">
    <text evidence="1">Monomer.</text>
</comment>
<comment type="subcellular location">
    <subcellularLocation>
        <location>Plastid</location>
        <location>Chloroplast</location>
    </subcellularLocation>
    <subcellularLocation>
        <location>Mitochondrion</location>
    </subcellularLocation>
</comment>
<comment type="disruption phenotype">
    <text evidence="5 6">No visible phenotype under normal growth conditions at the permissive temperature of 30 degrees Celsius, but mutant seedlings develop chlorotic leaves with aberrant chloroplasts under the restrictive temperature of 20 degrees Celsius.</text>
</comment>
<comment type="similarity">
    <text evidence="7">Belongs to the guanylate kinase family.</text>
</comment>
<accession>Q10M74</accession>
<accession>A0A0N7KH63</accession>
<gene>
    <name type="primary">V2</name>
    <name type="ordered locus">Os03g0320900</name>
    <name type="ordered locus">LOC_Os03g20460</name>
</gene>
<protein>
    <recommendedName>
        <fullName>Guanylate kinase 2, chloroplastic/mitochondrial</fullName>
        <shortName>OsGKpm</shortName>
        <ecNumber>2.7.4.8</ecNumber>
    </recommendedName>
    <alternativeName>
        <fullName>GMP kinase 2</fullName>
    </alternativeName>
    <alternativeName>
        <fullName>Protein VIRESCENT 2</fullName>
    </alternativeName>
</protein>
<reference key="1">
    <citation type="journal article" date="2007" name="Plant J.">
        <title>The rice nuclear gene, VIRESCENT 2, is essential for chloroplast development and encodes a novel type of guanylate kinase targeted to plastids and mitochondria.</title>
        <authorList>
            <person name="Sugimoto H."/>
            <person name="Kusumi K."/>
            <person name="Noguchi K."/>
            <person name="Yano M."/>
            <person name="Yoshimura A."/>
            <person name="Iba K."/>
        </authorList>
    </citation>
    <scope>NUCLEOTIDE SEQUENCE [MRNA]</scope>
    <scope>FUNCTION</scope>
    <scope>CATALYTIC ACTIVITY</scope>
    <scope>DISRUPTION PHENOTYPE</scope>
    <scope>MUTAGENESIS OF VAL-162</scope>
    <source>
        <strain>cv. Taichung 65</strain>
    </source>
</reference>
<reference key="2">
    <citation type="journal article" date="2005" name="Genome Res.">
        <title>Sequence, annotation, and analysis of synteny between rice chromosome 3 and diverged grass species.</title>
        <authorList>
            <consortium name="The rice chromosome 3 sequencing consortium"/>
            <person name="Buell C.R."/>
            <person name="Yuan Q."/>
            <person name="Ouyang S."/>
            <person name="Liu J."/>
            <person name="Zhu W."/>
            <person name="Wang A."/>
            <person name="Maiti R."/>
            <person name="Haas B."/>
            <person name="Wortman J."/>
            <person name="Pertea M."/>
            <person name="Jones K.M."/>
            <person name="Kim M."/>
            <person name="Overton L."/>
            <person name="Tsitrin T."/>
            <person name="Fadrosh D."/>
            <person name="Bera J."/>
            <person name="Weaver B."/>
            <person name="Jin S."/>
            <person name="Johri S."/>
            <person name="Reardon M."/>
            <person name="Webb K."/>
            <person name="Hill J."/>
            <person name="Moffat K."/>
            <person name="Tallon L."/>
            <person name="Van Aken S."/>
            <person name="Lewis M."/>
            <person name="Utterback T."/>
            <person name="Feldblyum T."/>
            <person name="Zismann V."/>
            <person name="Iobst S."/>
            <person name="Hsiao J."/>
            <person name="de Vazeille A.R."/>
            <person name="Salzberg S.L."/>
            <person name="White O."/>
            <person name="Fraser C.M."/>
            <person name="Yu Y."/>
            <person name="Kim H."/>
            <person name="Rambo T."/>
            <person name="Currie J."/>
            <person name="Collura K."/>
            <person name="Kernodle-Thompson S."/>
            <person name="Wei F."/>
            <person name="Kudrna K."/>
            <person name="Ammiraju J.S.S."/>
            <person name="Luo M."/>
            <person name="Goicoechea J.L."/>
            <person name="Wing R.A."/>
            <person name="Henry D."/>
            <person name="Oates R."/>
            <person name="Palmer M."/>
            <person name="Pries G."/>
            <person name="Saski C."/>
            <person name="Simmons J."/>
            <person name="Soderlund C."/>
            <person name="Nelson W."/>
            <person name="de la Bastide M."/>
            <person name="Spiegel L."/>
            <person name="Nascimento L."/>
            <person name="Huang E."/>
            <person name="Preston R."/>
            <person name="Zutavern T."/>
            <person name="Palmer L."/>
            <person name="O'Shaughnessy A."/>
            <person name="Dike S."/>
            <person name="McCombie W.R."/>
            <person name="Minx P."/>
            <person name="Cordum H."/>
            <person name="Wilson R."/>
            <person name="Jin W."/>
            <person name="Lee H.R."/>
            <person name="Jiang J."/>
            <person name="Jackson S."/>
        </authorList>
    </citation>
    <scope>NUCLEOTIDE SEQUENCE [LARGE SCALE GENOMIC DNA]</scope>
    <source>
        <strain>cv. Nipponbare</strain>
    </source>
</reference>
<reference key="3">
    <citation type="journal article" date="2005" name="Nature">
        <title>The map-based sequence of the rice genome.</title>
        <authorList>
            <consortium name="International rice genome sequencing project (IRGSP)"/>
        </authorList>
    </citation>
    <scope>NUCLEOTIDE SEQUENCE [LARGE SCALE GENOMIC DNA]</scope>
    <source>
        <strain>cv. Nipponbare</strain>
    </source>
</reference>
<reference key="4">
    <citation type="journal article" date="2008" name="Nucleic Acids Res.">
        <title>The rice annotation project database (RAP-DB): 2008 update.</title>
        <authorList>
            <consortium name="The rice annotation project (RAP)"/>
        </authorList>
    </citation>
    <scope>GENOME REANNOTATION</scope>
    <source>
        <strain>cv. Nipponbare</strain>
    </source>
</reference>
<reference key="5">
    <citation type="journal article" date="2013" name="Rice">
        <title>Improvement of the Oryza sativa Nipponbare reference genome using next generation sequence and optical map data.</title>
        <authorList>
            <person name="Kawahara Y."/>
            <person name="de la Bastide M."/>
            <person name="Hamilton J.P."/>
            <person name="Kanamori H."/>
            <person name="McCombie W.R."/>
            <person name="Ouyang S."/>
            <person name="Schwartz D.C."/>
            <person name="Tanaka T."/>
            <person name="Wu J."/>
            <person name="Zhou S."/>
            <person name="Childs K.L."/>
            <person name="Davidson R.M."/>
            <person name="Lin H."/>
            <person name="Quesada-Ocampo L."/>
            <person name="Vaillancourt B."/>
            <person name="Sakai H."/>
            <person name="Lee S.S."/>
            <person name="Kim J."/>
            <person name="Numa H."/>
            <person name="Itoh T."/>
            <person name="Buell C.R."/>
            <person name="Matsumoto T."/>
        </authorList>
    </citation>
    <scope>GENOME REANNOTATION</scope>
    <source>
        <strain>cv. Nipponbare</strain>
    </source>
</reference>
<reference key="6">
    <citation type="journal article" date="2003" name="Science">
        <title>Collection, mapping, and annotation of over 28,000 cDNA clones from japonica rice.</title>
        <authorList>
            <consortium name="The rice full-length cDNA consortium"/>
        </authorList>
    </citation>
    <scope>NUCLEOTIDE SEQUENCE [LARGE SCALE MRNA]</scope>
    <source>
        <strain>cv. Nipponbare</strain>
    </source>
</reference>
<reference key="7">
    <citation type="journal article" date="2004" name="Plant Cell Physiol.">
        <title>The virescent-2 mutation inhibits translation of plastid transcripts for the plastid genetic system at an early stage of chloroplast differentiation.</title>
        <authorList>
            <person name="Sugimoto H."/>
            <person name="Kusumi K."/>
            <person name="Tozawa Y."/>
            <person name="Yazaki J."/>
            <person name="Kishimoto N."/>
            <person name="Kikuchi S."/>
            <person name="Iba K."/>
        </authorList>
    </citation>
    <scope>FUNCTION</scope>
    <scope>DISRUPTION PHENOTYPE</scope>
</reference>
<proteinExistence type="evidence at protein level"/>
<feature type="transit peptide" description="Chloroplast and mitochondrion" evidence="2">
    <location>
        <begin position="1"/>
        <end position="42"/>
    </location>
</feature>
<feature type="chain" id="PRO_0000430129" description="Guanylate kinase 2, chloroplastic/mitochondrial">
    <location>
        <begin position="43"/>
        <end position="285"/>
    </location>
</feature>
<feature type="domain" description="Guanylate kinase-like" evidence="3">
    <location>
        <begin position="91"/>
        <end position="272"/>
    </location>
</feature>
<feature type="region of interest" description="Disordered" evidence="4">
    <location>
        <begin position="1"/>
        <end position="66"/>
    </location>
</feature>
<feature type="compositionally biased region" description="Low complexity" evidence="4">
    <location>
        <begin position="1"/>
        <end position="19"/>
    </location>
</feature>
<feature type="compositionally biased region" description="Pro residues" evidence="4">
    <location>
        <begin position="20"/>
        <end position="36"/>
    </location>
</feature>
<feature type="compositionally biased region" description="Low complexity" evidence="4">
    <location>
        <begin position="40"/>
        <end position="50"/>
    </location>
</feature>
<feature type="active site" evidence="1">
    <location>
        <position position="130"/>
    </location>
</feature>
<feature type="active site" evidence="1">
    <location>
        <position position="224"/>
    </location>
</feature>
<feature type="active site" evidence="1">
    <location>
        <position position="235"/>
    </location>
</feature>
<feature type="binding site" evidence="3">
    <location>
        <begin position="98"/>
        <end position="105"/>
    </location>
    <ligand>
        <name>ATP</name>
        <dbReference type="ChEBI" id="CHEBI:30616"/>
    </ligand>
</feature>
<feature type="binding site" evidence="1">
    <location>
        <position position="255"/>
    </location>
    <ligand>
        <name>ATP</name>
        <dbReference type="ChEBI" id="CHEBI:30616"/>
    </ligand>
</feature>
<feature type="mutagenesis site" description="In v2; reduces specific activity for GMP 20-fold. Development of chlorotic leaves at the restrictive temperature of 20 degrees Celsius." evidence="6">
    <original>V</original>
    <variation>I</variation>
    <location>
        <position position="162"/>
    </location>
</feature>